<organism>
    <name type="scientific">Methanococcoides burtonii (strain DSM 6242 / NBRC 107633 / OCM 468 / ACE-M)</name>
    <dbReference type="NCBI Taxonomy" id="259564"/>
    <lineage>
        <taxon>Archaea</taxon>
        <taxon>Methanobacteriati</taxon>
        <taxon>Methanobacteriota</taxon>
        <taxon>Stenosarchaea group</taxon>
        <taxon>Methanomicrobia</taxon>
        <taxon>Methanosarcinales</taxon>
        <taxon>Methanosarcinaceae</taxon>
        <taxon>Methanococcoides</taxon>
    </lineage>
</organism>
<protein>
    <recommendedName>
        <fullName evidence="1">Large ribosomal subunit protein eL37</fullName>
    </recommendedName>
    <alternativeName>
        <fullName evidence="2">50S ribosomal protein L37e</fullName>
    </alternativeName>
</protein>
<feature type="chain" id="PRO_1000017762" description="Large ribosomal subunit protein eL37">
    <location>
        <begin position="1"/>
        <end position="56"/>
    </location>
</feature>
<feature type="zinc finger region" description="C4-type" evidence="1">
    <location>
        <begin position="19"/>
        <end position="37"/>
    </location>
</feature>
<feature type="binding site" evidence="1">
    <location>
        <position position="19"/>
    </location>
    <ligand>
        <name>Zn(2+)</name>
        <dbReference type="ChEBI" id="CHEBI:29105"/>
    </ligand>
</feature>
<feature type="binding site" evidence="1">
    <location>
        <position position="22"/>
    </location>
    <ligand>
        <name>Zn(2+)</name>
        <dbReference type="ChEBI" id="CHEBI:29105"/>
    </ligand>
</feature>
<feature type="binding site" evidence="1">
    <location>
        <position position="34"/>
    </location>
    <ligand>
        <name>Zn(2+)</name>
        <dbReference type="ChEBI" id="CHEBI:29105"/>
    </ligand>
</feature>
<feature type="binding site" evidence="1">
    <location>
        <position position="37"/>
    </location>
    <ligand>
        <name>Zn(2+)</name>
        <dbReference type="ChEBI" id="CHEBI:29105"/>
    </ligand>
</feature>
<gene>
    <name evidence="1" type="primary">rpl37e</name>
    <name type="ordered locus">Mbur_2180</name>
</gene>
<evidence type="ECO:0000255" key="1">
    <source>
        <dbReference type="HAMAP-Rule" id="MF_00547"/>
    </source>
</evidence>
<evidence type="ECO:0000305" key="2"/>
<accession>Q12U31</accession>
<comment type="function">
    <text evidence="1">Binds to the 23S rRNA.</text>
</comment>
<comment type="cofactor">
    <cofactor evidence="1">
        <name>Zn(2+)</name>
        <dbReference type="ChEBI" id="CHEBI:29105"/>
    </cofactor>
    <text evidence="1">Binds 1 zinc ion per subunit.</text>
</comment>
<comment type="similarity">
    <text evidence="1">Belongs to the eukaryotic ribosomal protein eL37 family.</text>
</comment>
<proteinExistence type="inferred from homology"/>
<reference key="1">
    <citation type="journal article" date="2009" name="ISME J.">
        <title>The genome sequence of the psychrophilic archaeon, Methanococcoides burtonii: the role of genome evolution in cold adaptation.</title>
        <authorList>
            <person name="Allen M.A."/>
            <person name="Lauro F.M."/>
            <person name="Williams T.J."/>
            <person name="Burg D."/>
            <person name="Siddiqui K.S."/>
            <person name="De Francisci D."/>
            <person name="Chong K.W."/>
            <person name="Pilak O."/>
            <person name="Chew H.H."/>
            <person name="De Maere M.Z."/>
            <person name="Ting L."/>
            <person name="Katrib M."/>
            <person name="Ng C."/>
            <person name="Sowers K.R."/>
            <person name="Galperin M.Y."/>
            <person name="Anderson I.J."/>
            <person name="Ivanova N."/>
            <person name="Dalin E."/>
            <person name="Martinez M."/>
            <person name="Lapidus A."/>
            <person name="Hauser L."/>
            <person name="Land M."/>
            <person name="Thomas T."/>
            <person name="Cavicchioli R."/>
        </authorList>
    </citation>
    <scope>NUCLEOTIDE SEQUENCE [LARGE SCALE GENOMIC DNA]</scope>
    <source>
        <strain>DSM 6242 / NBRC 107633 / OCM 468 / ACE-M</strain>
    </source>
</reference>
<sequence length="56" mass="6513">MSKGTPSMGKRQKRTHAKCRRCGSVSLNIHTKQCTSCGFGRTSRMRSYQWQRKCKF</sequence>
<keyword id="KW-0479">Metal-binding</keyword>
<keyword id="KW-0687">Ribonucleoprotein</keyword>
<keyword id="KW-0689">Ribosomal protein</keyword>
<keyword id="KW-0694">RNA-binding</keyword>
<keyword id="KW-0699">rRNA-binding</keyword>
<keyword id="KW-0862">Zinc</keyword>
<keyword id="KW-0863">Zinc-finger</keyword>
<dbReference type="EMBL" id="CP000300">
    <property type="protein sequence ID" value="ABE53045.1"/>
    <property type="molecule type" value="Genomic_DNA"/>
</dbReference>
<dbReference type="SMR" id="Q12U31"/>
<dbReference type="STRING" id="259564.Mbur_2180"/>
<dbReference type="KEGG" id="mbu:Mbur_2180"/>
<dbReference type="HOGENOM" id="CLU_208825_0_0_2"/>
<dbReference type="OrthoDB" id="5619at2157"/>
<dbReference type="Proteomes" id="UP000001979">
    <property type="component" value="Chromosome"/>
</dbReference>
<dbReference type="GO" id="GO:0022625">
    <property type="term" value="C:cytosolic large ribosomal subunit"/>
    <property type="evidence" value="ECO:0007669"/>
    <property type="project" value="TreeGrafter"/>
</dbReference>
<dbReference type="GO" id="GO:0019843">
    <property type="term" value="F:rRNA binding"/>
    <property type="evidence" value="ECO:0007669"/>
    <property type="project" value="UniProtKB-KW"/>
</dbReference>
<dbReference type="GO" id="GO:0003735">
    <property type="term" value="F:structural constituent of ribosome"/>
    <property type="evidence" value="ECO:0007669"/>
    <property type="project" value="InterPro"/>
</dbReference>
<dbReference type="GO" id="GO:0008270">
    <property type="term" value="F:zinc ion binding"/>
    <property type="evidence" value="ECO:0007669"/>
    <property type="project" value="UniProtKB-UniRule"/>
</dbReference>
<dbReference type="GO" id="GO:0006412">
    <property type="term" value="P:translation"/>
    <property type="evidence" value="ECO:0007669"/>
    <property type="project" value="UniProtKB-UniRule"/>
</dbReference>
<dbReference type="FunFam" id="2.20.25.30:FF:000003">
    <property type="entry name" value="50S ribosomal protein L37e"/>
    <property type="match status" value="1"/>
</dbReference>
<dbReference type="Gene3D" id="2.20.25.30">
    <property type="match status" value="1"/>
</dbReference>
<dbReference type="HAMAP" id="MF_00547">
    <property type="entry name" value="Ribosomal_eL37"/>
    <property type="match status" value="1"/>
</dbReference>
<dbReference type="InterPro" id="IPR001569">
    <property type="entry name" value="Ribosomal_eL37"/>
</dbReference>
<dbReference type="InterPro" id="IPR011331">
    <property type="entry name" value="Ribosomal_eL37/eL43"/>
</dbReference>
<dbReference type="InterPro" id="IPR018267">
    <property type="entry name" value="Ribosomal_eL37_CS"/>
</dbReference>
<dbReference type="InterPro" id="IPR011332">
    <property type="entry name" value="Ribosomal_zn-bd"/>
</dbReference>
<dbReference type="NCBIfam" id="NF003214">
    <property type="entry name" value="PRK04179.1"/>
    <property type="match status" value="1"/>
</dbReference>
<dbReference type="PANTHER" id="PTHR10768">
    <property type="entry name" value="60S RIBOSOMAL PROTEIN L37"/>
    <property type="match status" value="1"/>
</dbReference>
<dbReference type="PANTHER" id="PTHR10768:SF0">
    <property type="entry name" value="RIBOSOMAL PROTEIN L37"/>
    <property type="match status" value="1"/>
</dbReference>
<dbReference type="Pfam" id="PF01907">
    <property type="entry name" value="Ribosomal_L37e"/>
    <property type="match status" value="1"/>
</dbReference>
<dbReference type="SUPFAM" id="SSF57829">
    <property type="entry name" value="Zn-binding ribosomal proteins"/>
    <property type="match status" value="1"/>
</dbReference>
<dbReference type="PROSITE" id="PS01077">
    <property type="entry name" value="RIBOSOMAL_L37E"/>
    <property type="match status" value="1"/>
</dbReference>
<name>RL37_METBU</name>